<feature type="chain" id="PRO_1000056085" description="Large ribosomal subunit protein uL30">
    <location>
        <begin position="1"/>
        <end position="58"/>
    </location>
</feature>
<protein>
    <recommendedName>
        <fullName evidence="1">Large ribosomal subunit protein uL30</fullName>
    </recommendedName>
    <alternativeName>
        <fullName evidence="2">50S ribosomal protein L30</fullName>
    </alternativeName>
</protein>
<reference key="1">
    <citation type="journal article" date="2007" name="PLoS Biol.">
        <title>Evolution of symbiotic bacteria in the distal human intestine.</title>
        <authorList>
            <person name="Xu J."/>
            <person name="Mahowald M.A."/>
            <person name="Ley R.E."/>
            <person name="Lozupone C.A."/>
            <person name="Hamady M."/>
            <person name="Martens E.C."/>
            <person name="Henrissat B."/>
            <person name="Coutinho P.M."/>
            <person name="Minx P."/>
            <person name="Latreille P."/>
            <person name="Cordum H."/>
            <person name="Van Brunt A."/>
            <person name="Kim K."/>
            <person name="Fulton R.S."/>
            <person name="Fulton L.A."/>
            <person name="Clifton S.W."/>
            <person name="Wilson R.K."/>
            <person name="Knight R.D."/>
            <person name="Gordon J.I."/>
        </authorList>
    </citation>
    <scope>NUCLEOTIDE SEQUENCE [LARGE SCALE GENOMIC DNA]</scope>
    <source>
        <strain>ATCC 8503 / DSM 20701 / CIP 104284 / JCM 5825 / NCTC 11152</strain>
    </source>
</reference>
<gene>
    <name evidence="1" type="primary">rpmD</name>
    <name type="ordered locus">BDI_2362</name>
</gene>
<name>RL30_PARD8</name>
<sequence>MATIKVKQVKSRIKCPKDQKRTLDALGLRKMNQIVEHEANPAILGMVEKVKHLVSVEK</sequence>
<keyword id="KW-1185">Reference proteome</keyword>
<keyword id="KW-0687">Ribonucleoprotein</keyword>
<keyword id="KW-0689">Ribosomal protein</keyword>
<dbReference type="EMBL" id="CP000140">
    <property type="protein sequence ID" value="ABR44087.1"/>
    <property type="molecule type" value="Genomic_DNA"/>
</dbReference>
<dbReference type="RefSeq" id="WP_005853996.1">
    <property type="nucleotide sequence ID" value="NZ_LR215978.1"/>
</dbReference>
<dbReference type="SMR" id="A6LEH3"/>
<dbReference type="STRING" id="435591.BDI_2362"/>
<dbReference type="PaxDb" id="435591-BDI_2362"/>
<dbReference type="GeneID" id="93522355"/>
<dbReference type="KEGG" id="pdi:BDI_2362"/>
<dbReference type="eggNOG" id="COG1841">
    <property type="taxonomic scope" value="Bacteria"/>
</dbReference>
<dbReference type="HOGENOM" id="CLU_131047_1_1_10"/>
<dbReference type="BioCyc" id="PDIS435591:G1G5A-2427-MONOMER"/>
<dbReference type="Proteomes" id="UP000000566">
    <property type="component" value="Chromosome"/>
</dbReference>
<dbReference type="GO" id="GO:0022625">
    <property type="term" value="C:cytosolic large ribosomal subunit"/>
    <property type="evidence" value="ECO:0007669"/>
    <property type="project" value="TreeGrafter"/>
</dbReference>
<dbReference type="GO" id="GO:0003735">
    <property type="term" value="F:structural constituent of ribosome"/>
    <property type="evidence" value="ECO:0007669"/>
    <property type="project" value="InterPro"/>
</dbReference>
<dbReference type="GO" id="GO:0006412">
    <property type="term" value="P:translation"/>
    <property type="evidence" value="ECO:0007669"/>
    <property type="project" value="UniProtKB-UniRule"/>
</dbReference>
<dbReference type="CDD" id="cd01658">
    <property type="entry name" value="Ribosomal_L30"/>
    <property type="match status" value="1"/>
</dbReference>
<dbReference type="FunFam" id="3.30.1390.20:FF:000001">
    <property type="entry name" value="50S ribosomal protein L30"/>
    <property type="match status" value="1"/>
</dbReference>
<dbReference type="Gene3D" id="3.30.1390.20">
    <property type="entry name" value="Ribosomal protein L30, ferredoxin-like fold domain"/>
    <property type="match status" value="1"/>
</dbReference>
<dbReference type="HAMAP" id="MF_01371_B">
    <property type="entry name" value="Ribosomal_uL30_B"/>
    <property type="match status" value="1"/>
</dbReference>
<dbReference type="InterPro" id="IPR036919">
    <property type="entry name" value="Ribo_uL30_ferredoxin-like_sf"/>
</dbReference>
<dbReference type="InterPro" id="IPR005996">
    <property type="entry name" value="Ribosomal_uL30_bac-type"/>
</dbReference>
<dbReference type="InterPro" id="IPR018038">
    <property type="entry name" value="Ribosomal_uL30_CS"/>
</dbReference>
<dbReference type="InterPro" id="IPR016082">
    <property type="entry name" value="Ribosomal_uL30_ferredoxin-like"/>
</dbReference>
<dbReference type="NCBIfam" id="TIGR01308">
    <property type="entry name" value="rpmD_bact"/>
    <property type="match status" value="1"/>
</dbReference>
<dbReference type="PANTHER" id="PTHR15892:SF2">
    <property type="entry name" value="LARGE RIBOSOMAL SUBUNIT PROTEIN UL30M"/>
    <property type="match status" value="1"/>
</dbReference>
<dbReference type="PANTHER" id="PTHR15892">
    <property type="entry name" value="MITOCHONDRIAL RIBOSOMAL PROTEIN L30"/>
    <property type="match status" value="1"/>
</dbReference>
<dbReference type="Pfam" id="PF00327">
    <property type="entry name" value="Ribosomal_L30"/>
    <property type="match status" value="1"/>
</dbReference>
<dbReference type="PIRSF" id="PIRSF002211">
    <property type="entry name" value="Ribosomal_L30_bac-type"/>
    <property type="match status" value="1"/>
</dbReference>
<dbReference type="SUPFAM" id="SSF55129">
    <property type="entry name" value="Ribosomal protein L30p/L7e"/>
    <property type="match status" value="1"/>
</dbReference>
<dbReference type="PROSITE" id="PS00634">
    <property type="entry name" value="RIBOSOMAL_L30"/>
    <property type="match status" value="1"/>
</dbReference>
<organism>
    <name type="scientific">Parabacteroides distasonis (strain ATCC 8503 / DSM 20701 / CIP 104284 / JCM 5825 / NCTC 11152)</name>
    <dbReference type="NCBI Taxonomy" id="435591"/>
    <lineage>
        <taxon>Bacteria</taxon>
        <taxon>Pseudomonadati</taxon>
        <taxon>Bacteroidota</taxon>
        <taxon>Bacteroidia</taxon>
        <taxon>Bacteroidales</taxon>
        <taxon>Tannerellaceae</taxon>
        <taxon>Parabacteroides</taxon>
    </lineage>
</organism>
<accession>A6LEH3</accession>
<evidence type="ECO:0000255" key="1">
    <source>
        <dbReference type="HAMAP-Rule" id="MF_01371"/>
    </source>
</evidence>
<evidence type="ECO:0000305" key="2"/>
<proteinExistence type="inferred from homology"/>
<comment type="subunit">
    <text evidence="1">Part of the 50S ribosomal subunit.</text>
</comment>
<comment type="similarity">
    <text evidence="1">Belongs to the universal ribosomal protein uL30 family.</text>
</comment>